<reference key="1">
    <citation type="journal article" date="2002" name="Nature">
        <title>Complete genome sequence of the model actinomycete Streptomyces coelicolor A3(2).</title>
        <authorList>
            <person name="Bentley S.D."/>
            <person name="Chater K.F."/>
            <person name="Cerdeno-Tarraga A.-M."/>
            <person name="Challis G.L."/>
            <person name="Thomson N.R."/>
            <person name="James K.D."/>
            <person name="Harris D.E."/>
            <person name="Quail M.A."/>
            <person name="Kieser H."/>
            <person name="Harper D."/>
            <person name="Bateman A."/>
            <person name="Brown S."/>
            <person name="Chandra G."/>
            <person name="Chen C.W."/>
            <person name="Collins M."/>
            <person name="Cronin A."/>
            <person name="Fraser A."/>
            <person name="Goble A."/>
            <person name="Hidalgo J."/>
            <person name="Hornsby T."/>
            <person name="Howarth S."/>
            <person name="Huang C.-H."/>
            <person name="Kieser T."/>
            <person name="Larke L."/>
            <person name="Murphy L.D."/>
            <person name="Oliver K."/>
            <person name="O'Neil S."/>
            <person name="Rabbinowitsch E."/>
            <person name="Rajandream M.A."/>
            <person name="Rutherford K.M."/>
            <person name="Rutter S."/>
            <person name="Seeger K."/>
            <person name="Saunders D."/>
            <person name="Sharp S."/>
            <person name="Squares R."/>
            <person name="Squares S."/>
            <person name="Taylor K."/>
            <person name="Warren T."/>
            <person name="Wietzorrek A."/>
            <person name="Woodward J.R."/>
            <person name="Barrell B.G."/>
            <person name="Parkhill J."/>
            <person name="Hopwood D.A."/>
        </authorList>
    </citation>
    <scope>NUCLEOTIDE SEQUENCE [LARGE SCALE GENOMIC DNA]</scope>
    <source>
        <strain>ATCC BAA-471 / A3(2) / M145</strain>
    </source>
</reference>
<keyword id="KW-1003">Cell membrane</keyword>
<keyword id="KW-0169">Cobalamin biosynthesis</keyword>
<keyword id="KW-0170">Cobalt</keyword>
<keyword id="KW-0171">Cobalt transport</keyword>
<keyword id="KW-0406">Ion transport</keyword>
<keyword id="KW-0472">Membrane</keyword>
<keyword id="KW-1185">Reference proteome</keyword>
<keyword id="KW-0812">Transmembrane</keyword>
<keyword id="KW-1133">Transmembrane helix</keyword>
<keyword id="KW-0813">Transport</keyword>
<accession>O54190</accession>
<organism>
    <name type="scientific">Streptomyces coelicolor (strain ATCC BAA-471 / A3(2) / M145)</name>
    <dbReference type="NCBI Taxonomy" id="100226"/>
    <lineage>
        <taxon>Bacteria</taxon>
        <taxon>Bacillati</taxon>
        <taxon>Actinomycetota</taxon>
        <taxon>Actinomycetes</taxon>
        <taxon>Kitasatosporales</taxon>
        <taxon>Streptomycetaceae</taxon>
        <taxon>Streptomyces</taxon>
        <taxon>Streptomyces albidoflavus group</taxon>
    </lineage>
</organism>
<proteinExistence type="inferred from homology"/>
<comment type="function">
    <text evidence="1">Part of the energy-coupling factor (ECF) transporter complex CbiMNOQ involved in cobalt import.</text>
</comment>
<comment type="pathway">
    <text evidence="1">Cofactor biosynthesis; adenosylcobalamin biosynthesis.</text>
</comment>
<comment type="subunit">
    <text evidence="1">Forms an energy-coupling factor (ECF) transporter complex composed of an ATP-binding protein (A component, CbiO), a transmembrane protein (T component, CbiQ) and 2 possible substrate-capture proteins (S components, CbiM and CbiN) of unknown stoichimetry.</text>
</comment>
<comment type="subcellular location">
    <subcellularLocation>
        <location evidence="1">Cell membrane</location>
        <topology evidence="1">Multi-pass membrane protein</topology>
    </subcellularLocation>
</comment>
<comment type="similarity">
    <text evidence="1">Belongs to the CbiM family.</text>
</comment>
<comment type="sequence caution" evidence="2">
    <conflict type="erroneous initiation">
        <sequence resource="EMBL-CDS" id="CAA16218"/>
    </conflict>
    <text>Extended N-terminus.</text>
</comment>
<feature type="chain" id="PRO_0000411149" description="Cobalt transport protein CbiM">
    <location>
        <begin position="1"/>
        <end position="232"/>
    </location>
</feature>
<feature type="transmembrane region" description="Helical" evidence="1">
    <location>
        <begin position="6"/>
        <end position="26"/>
    </location>
</feature>
<feature type="transmembrane region" description="Helical" evidence="1">
    <location>
        <begin position="43"/>
        <end position="63"/>
    </location>
</feature>
<feature type="transmembrane region" description="Helical" evidence="1">
    <location>
        <begin position="84"/>
        <end position="104"/>
    </location>
</feature>
<feature type="transmembrane region" description="Helical" evidence="1">
    <location>
        <begin position="107"/>
        <end position="127"/>
    </location>
</feature>
<feature type="transmembrane region" description="Helical" evidence="1">
    <location>
        <begin position="135"/>
        <end position="155"/>
    </location>
</feature>
<feature type="transmembrane region" description="Helical" evidence="1">
    <location>
        <begin position="181"/>
        <end position="201"/>
    </location>
</feature>
<gene>
    <name evidence="1" type="primary">cbiM</name>
    <name type="ordered locus">SCO5961</name>
    <name type="ORF">SC7H1.31c</name>
</gene>
<evidence type="ECO:0000255" key="1">
    <source>
        <dbReference type="HAMAP-Rule" id="MF_01462"/>
    </source>
</evidence>
<evidence type="ECO:0000305" key="2"/>
<name>CBIM_STRCO</name>
<protein>
    <recommendedName>
        <fullName evidence="1">Cobalt transport protein CbiM</fullName>
    </recommendedName>
    <alternativeName>
        <fullName evidence="1">Energy-coupling factor transporter probable substrate-capture protein CbiM</fullName>
        <shortName evidence="1">ECF transporter S component CbiM</shortName>
    </alternativeName>
</protein>
<sequence>MHIAEGFLPPAHAIAWGVASAPFVVHGVRSLTREVREHPESTLLLGASGAFTFVLSALKLPSVTGSCSHPTGTGLGAILFRPPIMAVLGTITLLFQALLLAHGGLTTLGANVFSMAIVGPWAGYGVYRLLRRWDVPLMVTVFFGAFVADLSTYCVTSVQLALAFPDPSSGFLGALGKFGSIFAVTQIPLAVSEGLLTVIVMRLLVQSSKGELTRLGVLLTRTGERKQEAVAR</sequence>
<dbReference type="EMBL" id="AL939125">
    <property type="protein sequence ID" value="CAA16218.1"/>
    <property type="status" value="ALT_INIT"/>
    <property type="molecule type" value="Genomic_DNA"/>
</dbReference>
<dbReference type="PIR" id="T35726">
    <property type="entry name" value="T35726"/>
</dbReference>
<dbReference type="RefSeq" id="NP_630078.2">
    <property type="nucleotide sequence ID" value="NC_003888.3"/>
</dbReference>
<dbReference type="RefSeq" id="WP_011030567.1">
    <property type="nucleotide sequence ID" value="NZ_VNID01000007.1"/>
</dbReference>
<dbReference type="SMR" id="O54190"/>
<dbReference type="STRING" id="100226.gene:17763621"/>
<dbReference type="PaxDb" id="100226-SCO5961"/>
<dbReference type="KEGG" id="sco:SCO5961"/>
<dbReference type="PATRIC" id="fig|100226.15.peg.6058"/>
<dbReference type="eggNOG" id="COG0310">
    <property type="taxonomic scope" value="Bacteria"/>
</dbReference>
<dbReference type="HOGENOM" id="CLU_052508_3_0_11"/>
<dbReference type="InParanoid" id="O54190"/>
<dbReference type="OrthoDB" id="9809846at2"/>
<dbReference type="PhylomeDB" id="O54190"/>
<dbReference type="UniPathway" id="UPA00148"/>
<dbReference type="Proteomes" id="UP000001973">
    <property type="component" value="Chromosome"/>
</dbReference>
<dbReference type="GO" id="GO:0043190">
    <property type="term" value="C:ATP-binding cassette (ABC) transporter complex"/>
    <property type="evidence" value="ECO:0007669"/>
    <property type="project" value="InterPro"/>
</dbReference>
<dbReference type="GO" id="GO:0015087">
    <property type="term" value="F:cobalt ion transmembrane transporter activity"/>
    <property type="evidence" value="ECO:0007669"/>
    <property type="project" value="UniProtKB-UniRule"/>
</dbReference>
<dbReference type="GO" id="GO:0009236">
    <property type="term" value="P:cobalamin biosynthetic process"/>
    <property type="evidence" value="ECO:0007669"/>
    <property type="project" value="UniProtKB-UniRule"/>
</dbReference>
<dbReference type="FunFam" id="1.10.1760.20:FF:000001">
    <property type="entry name" value="Cobalt transport protein CbiM"/>
    <property type="match status" value="1"/>
</dbReference>
<dbReference type="Gene3D" id="1.10.1760.20">
    <property type="match status" value="1"/>
</dbReference>
<dbReference type="HAMAP" id="MF_01462">
    <property type="entry name" value="CbiM"/>
    <property type="match status" value="1"/>
</dbReference>
<dbReference type="InterPro" id="IPR018024">
    <property type="entry name" value="CbiM"/>
</dbReference>
<dbReference type="InterPro" id="IPR002751">
    <property type="entry name" value="CbiM/NikMN"/>
</dbReference>
<dbReference type="NCBIfam" id="TIGR00123">
    <property type="entry name" value="cbiM"/>
    <property type="match status" value="1"/>
</dbReference>
<dbReference type="NCBIfam" id="NF006184">
    <property type="entry name" value="PRK08319.1"/>
    <property type="match status" value="1"/>
</dbReference>
<dbReference type="PANTHER" id="PTHR43627">
    <property type="match status" value="1"/>
</dbReference>
<dbReference type="PANTHER" id="PTHR43627:SF1">
    <property type="entry name" value="COBALT TRANSPORT PROTEIN CBIM"/>
    <property type="match status" value="1"/>
</dbReference>
<dbReference type="Pfam" id="PF01891">
    <property type="entry name" value="CbiM"/>
    <property type="match status" value="1"/>
</dbReference>